<sequence>APTDMYSFGL</sequence>
<evidence type="ECO:0000269" key="1">
    <source>
    </source>
</evidence>
<evidence type="ECO:0000305" key="2"/>
<accession>P81822</accession>
<protein>
    <recommendedName>
        <fullName>Carcinustatin-19</fullName>
    </recommendedName>
</protein>
<feature type="peptide" id="PRO_0000043474" description="Carcinustatin-19">
    <location>
        <begin position="1"/>
        <end position="10"/>
    </location>
</feature>
<feature type="modified residue" description="Leucine amide" evidence="1">
    <location>
        <position position="10"/>
    </location>
</feature>
<keyword id="KW-0027">Amidation</keyword>
<keyword id="KW-0903">Direct protein sequencing</keyword>
<keyword id="KW-0527">Neuropeptide</keyword>
<keyword id="KW-0964">Secreted</keyword>
<dbReference type="GO" id="GO:0005576">
    <property type="term" value="C:extracellular region"/>
    <property type="evidence" value="ECO:0007669"/>
    <property type="project" value="UniProtKB-SubCell"/>
</dbReference>
<dbReference type="GO" id="GO:0007218">
    <property type="term" value="P:neuropeptide signaling pathway"/>
    <property type="evidence" value="ECO:0007669"/>
    <property type="project" value="UniProtKB-KW"/>
</dbReference>
<comment type="function">
    <text>May act as a neurotransmitter or neuromodulator.</text>
</comment>
<comment type="subcellular location">
    <subcellularLocation>
        <location>Secreted</location>
    </subcellularLocation>
</comment>
<comment type="similarity">
    <text evidence="2">Belongs to the allatostatin family.</text>
</comment>
<proteinExistence type="evidence at protein level"/>
<reference key="1">
    <citation type="journal article" date="1997" name="Eur. J. Biochem.">
        <title>Isolation and identification of multiple neuropeptides of the allatostatin superfamily in the shore crab Carcinus maenas.</title>
        <authorList>
            <person name="Duve H."/>
            <person name="Johnsen A.H."/>
            <person name="Maestro J.-L."/>
            <person name="Scott A.G."/>
            <person name="Jaros P.P."/>
            <person name="Thorpe A."/>
        </authorList>
    </citation>
    <scope>PROTEIN SEQUENCE</scope>
    <scope>AMIDATION AT LEU-10</scope>
    <source>
        <tissue>Cerebral ganglion</tissue>
        <tissue>Thoracic ganglion</tissue>
    </source>
</reference>
<name>ALL19_CARMA</name>
<organism>
    <name type="scientific">Carcinus maenas</name>
    <name type="common">Common shore crab</name>
    <name type="synonym">Green crab</name>
    <dbReference type="NCBI Taxonomy" id="6759"/>
    <lineage>
        <taxon>Eukaryota</taxon>
        <taxon>Metazoa</taxon>
        <taxon>Ecdysozoa</taxon>
        <taxon>Arthropoda</taxon>
        <taxon>Crustacea</taxon>
        <taxon>Multicrustacea</taxon>
        <taxon>Malacostraca</taxon>
        <taxon>Eumalacostraca</taxon>
        <taxon>Eucarida</taxon>
        <taxon>Decapoda</taxon>
        <taxon>Pleocyemata</taxon>
        <taxon>Brachyura</taxon>
        <taxon>Eubrachyura</taxon>
        <taxon>Portunoidea</taxon>
        <taxon>Carcinidae</taxon>
        <taxon>Carcinus</taxon>
    </lineage>
</organism>